<gene>
    <name evidence="1" type="primary">minC</name>
    <name type="ordered locus">BMA10229_A2631</name>
</gene>
<feature type="chain" id="PRO_1000047811" description="Probable septum site-determining protein MinC">
    <location>
        <begin position="1"/>
        <end position="270"/>
    </location>
</feature>
<feature type="region of interest" description="Disordered" evidence="2">
    <location>
        <begin position="105"/>
        <end position="129"/>
    </location>
</feature>
<feature type="compositionally biased region" description="Low complexity" evidence="2">
    <location>
        <begin position="116"/>
        <end position="129"/>
    </location>
</feature>
<keyword id="KW-0131">Cell cycle</keyword>
<keyword id="KW-0132">Cell division</keyword>
<keyword id="KW-0717">Septation</keyword>
<evidence type="ECO:0000255" key="1">
    <source>
        <dbReference type="HAMAP-Rule" id="MF_00267"/>
    </source>
</evidence>
<evidence type="ECO:0000256" key="2">
    <source>
        <dbReference type="SAM" id="MobiDB-lite"/>
    </source>
</evidence>
<reference key="1">
    <citation type="journal article" date="2010" name="Genome Biol. Evol.">
        <title>Continuing evolution of Burkholderia mallei through genome reduction and large-scale rearrangements.</title>
        <authorList>
            <person name="Losada L."/>
            <person name="Ronning C.M."/>
            <person name="DeShazer D."/>
            <person name="Woods D."/>
            <person name="Fedorova N."/>
            <person name="Kim H.S."/>
            <person name="Shabalina S.A."/>
            <person name="Pearson T.R."/>
            <person name="Brinkac L."/>
            <person name="Tan P."/>
            <person name="Nandi T."/>
            <person name="Crabtree J."/>
            <person name="Badger J."/>
            <person name="Beckstrom-Sternberg S."/>
            <person name="Saqib M."/>
            <person name="Schutzer S.E."/>
            <person name="Keim P."/>
            <person name="Nierman W.C."/>
        </authorList>
    </citation>
    <scope>NUCLEOTIDE SEQUENCE [LARGE SCALE GENOMIC DNA]</scope>
    <source>
        <strain>NCTC 10229</strain>
    </source>
</reference>
<dbReference type="EMBL" id="CP000546">
    <property type="protein sequence ID" value="ABN02141.1"/>
    <property type="molecule type" value="Genomic_DNA"/>
</dbReference>
<dbReference type="RefSeq" id="WP_004186698.1">
    <property type="nucleotide sequence ID" value="NC_008836.1"/>
</dbReference>
<dbReference type="SMR" id="A2S9G8"/>
<dbReference type="GeneID" id="92979820"/>
<dbReference type="KEGG" id="bml:BMA10229_A2631"/>
<dbReference type="HOGENOM" id="CLU_067812_0_0_4"/>
<dbReference type="Proteomes" id="UP000002283">
    <property type="component" value="Chromosome I"/>
</dbReference>
<dbReference type="GO" id="GO:0000902">
    <property type="term" value="P:cell morphogenesis"/>
    <property type="evidence" value="ECO:0007669"/>
    <property type="project" value="InterPro"/>
</dbReference>
<dbReference type="GO" id="GO:0000917">
    <property type="term" value="P:division septum assembly"/>
    <property type="evidence" value="ECO:0007669"/>
    <property type="project" value="UniProtKB-KW"/>
</dbReference>
<dbReference type="GO" id="GO:0051302">
    <property type="term" value="P:regulation of cell division"/>
    <property type="evidence" value="ECO:0007669"/>
    <property type="project" value="InterPro"/>
</dbReference>
<dbReference type="GO" id="GO:1901891">
    <property type="term" value="P:regulation of cell septum assembly"/>
    <property type="evidence" value="ECO:0007669"/>
    <property type="project" value="InterPro"/>
</dbReference>
<dbReference type="Gene3D" id="2.160.20.70">
    <property type="match status" value="1"/>
</dbReference>
<dbReference type="Gene3D" id="3.30.70.260">
    <property type="match status" value="1"/>
</dbReference>
<dbReference type="HAMAP" id="MF_00267">
    <property type="entry name" value="MinC"/>
    <property type="match status" value="1"/>
</dbReference>
<dbReference type="InterPro" id="IPR016098">
    <property type="entry name" value="CAP/MinC_C"/>
</dbReference>
<dbReference type="InterPro" id="IPR013033">
    <property type="entry name" value="MinC"/>
</dbReference>
<dbReference type="InterPro" id="IPR036145">
    <property type="entry name" value="MinC_C_sf"/>
</dbReference>
<dbReference type="InterPro" id="IPR007874">
    <property type="entry name" value="MinC_N"/>
</dbReference>
<dbReference type="InterPro" id="IPR005526">
    <property type="entry name" value="Septum_form_inhib_MinC_C"/>
</dbReference>
<dbReference type="NCBIfam" id="TIGR01222">
    <property type="entry name" value="minC"/>
    <property type="match status" value="1"/>
</dbReference>
<dbReference type="PANTHER" id="PTHR34108">
    <property type="entry name" value="SEPTUM SITE-DETERMINING PROTEIN MINC"/>
    <property type="match status" value="1"/>
</dbReference>
<dbReference type="PANTHER" id="PTHR34108:SF1">
    <property type="entry name" value="SEPTUM SITE-DETERMINING PROTEIN MINC"/>
    <property type="match status" value="1"/>
</dbReference>
<dbReference type="Pfam" id="PF03775">
    <property type="entry name" value="MinC_C"/>
    <property type="match status" value="1"/>
</dbReference>
<dbReference type="Pfam" id="PF05209">
    <property type="entry name" value="MinC_N"/>
    <property type="match status" value="1"/>
</dbReference>
<dbReference type="SUPFAM" id="SSF63848">
    <property type="entry name" value="Cell-division inhibitor MinC, C-terminal domain"/>
    <property type="match status" value="1"/>
</dbReference>
<proteinExistence type="inferred from homology"/>
<sequence>MSLKKSPFFELRSGSVDTLLFIVKTADLDALRAELVKRFEATPEFFADDVVAIDVRRLADHERVPLDDIRGMLNDVRMRVIGVVAQPEQHAWAASAGLPLLEARDRRAPSSKAADEAPVQQAEPAAPAAGQAALFEQAGPTLADAGAPPESPAPAVAAQSATLVVDRPLHSGQQIYAKGDLVVLGPVSYGAEVIAEGNIHIYAPLRGRALAGVHGNHDARIFCTCLEPELISIAGIYRTTENPLPADVLGKSVQIRLEQEKLMIEPLRLT</sequence>
<protein>
    <recommendedName>
        <fullName evidence="1">Probable septum site-determining protein MinC</fullName>
    </recommendedName>
</protein>
<organism>
    <name type="scientific">Burkholderia mallei (strain NCTC 10229)</name>
    <dbReference type="NCBI Taxonomy" id="412022"/>
    <lineage>
        <taxon>Bacteria</taxon>
        <taxon>Pseudomonadati</taxon>
        <taxon>Pseudomonadota</taxon>
        <taxon>Betaproteobacteria</taxon>
        <taxon>Burkholderiales</taxon>
        <taxon>Burkholderiaceae</taxon>
        <taxon>Burkholderia</taxon>
        <taxon>pseudomallei group</taxon>
    </lineage>
</organism>
<name>MINC_BURM9</name>
<comment type="function">
    <text evidence="1">Cell division inhibitor that blocks the formation of polar Z ring septums. Rapidly oscillates between the poles of the cell to destabilize FtsZ filaments that have formed before they mature into polar Z rings. Prevents FtsZ polymerization.</text>
</comment>
<comment type="subunit">
    <text evidence="1">Interacts with MinD and FtsZ.</text>
</comment>
<comment type="similarity">
    <text evidence="1">Belongs to the MinC family.</text>
</comment>
<accession>A2S9G8</accession>